<comment type="function">
    <text evidence="1">Participates actively in the response to hyperosmotic and heat shock by preventing the aggregation of stress-denatured proteins and by disaggregating proteins, also in an autonomous, DnaK-independent fashion. Unfolded proteins bind initially to DnaJ; upon interaction with the DnaJ-bound protein, DnaK hydrolyzes its bound ATP, resulting in the formation of a stable complex. GrpE releases ADP from DnaK; ATP binding to DnaK triggers the release of the substrate protein, thus completing the reaction cycle. Several rounds of ATP-dependent interactions between DnaJ, DnaK and GrpE are required for fully efficient folding. Also involved, together with DnaK and GrpE, in the DNA replication of plasmids through activation of initiation proteins.</text>
</comment>
<comment type="cofactor">
    <cofactor evidence="1">
        <name>Zn(2+)</name>
        <dbReference type="ChEBI" id="CHEBI:29105"/>
    </cofactor>
    <text evidence="1">Binds 2 Zn(2+) ions per monomer.</text>
</comment>
<comment type="subunit">
    <text evidence="1">Homodimer.</text>
</comment>
<comment type="subcellular location">
    <subcellularLocation>
        <location evidence="1">Cytoplasm</location>
    </subcellularLocation>
</comment>
<comment type="induction">
    <text>By heat shock.</text>
</comment>
<comment type="domain">
    <text evidence="1">The J domain is necessary and sufficient to stimulate DnaK ATPase activity. Zinc center 1 plays an important role in the autonomous, DnaK-independent chaperone activity of DnaJ. Zinc center 2 is essential for interaction with DnaK and for DnaJ activity.</text>
</comment>
<comment type="similarity">
    <text evidence="1">Belongs to the DnaJ family.</text>
</comment>
<feature type="chain" id="PRO_0000070762" description="Chaperone protein DnaJ">
    <location>
        <begin position="1"/>
        <end position="374"/>
    </location>
</feature>
<feature type="domain" description="J" evidence="1">
    <location>
        <begin position="5"/>
        <end position="70"/>
    </location>
</feature>
<feature type="repeat" description="CXXCXGXG motif">
    <location>
        <begin position="150"/>
        <end position="157"/>
    </location>
</feature>
<feature type="repeat" description="CXXCXGXG motif">
    <location>
        <begin position="167"/>
        <end position="174"/>
    </location>
</feature>
<feature type="repeat" description="CXXCXGXG motif">
    <location>
        <begin position="193"/>
        <end position="200"/>
    </location>
</feature>
<feature type="repeat" description="CXXCXGXG motif">
    <location>
        <begin position="207"/>
        <end position="214"/>
    </location>
</feature>
<feature type="zinc finger region" description="CR-type" evidence="1">
    <location>
        <begin position="137"/>
        <end position="219"/>
    </location>
</feature>
<feature type="binding site" evidence="1">
    <location>
        <position position="150"/>
    </location>
    <ligand>
        <name>Zn(2+)</name>
        <dbReference type="ChEBI" id="CHEBI:29105"/>
        <label>1</label>
    </ligand>
</feature>
<feature type="binding site" evidence="1">
    <location>
        <position position="153"/>
    </location>
    <ligand>
        <name>Zn(2+)</name>
        <dbReference type="ChEBI" id="CHEBI:29105"/>
        <label>1</label>
    </ligand>
</feature>
<feature type="binding site" evidence="1">
    <location>
        <position position="167"/>
    </location>
    <ligand>
        <name>Zn(2+)</name>
        <dbReference type="ChEBI" id="CHEBI:29105"/>
        <label>2</label>
    </ligand>
</feature>
<feature type="binding site" evidence="1">
    <location>
        <position position="170"/>
    </location>
    <ligand>
        <name>Zn(2+)</name>
        <dbReference type="ChEBI" id="CHEBI:29105"/>
        <label>2</label>
    </ligand>
</feature>
<feature type="binding site" evidence="1">
    <location>
        <position position="193"/>
    </location>
    <ligand>
        <name>Zn(2+)</name>
        <dbReference type="ChEBI" id="CHEBI:29105"/>
        <label>2</label>
    </ligand>
</feature>
<feature type="binding site" evidence="1">
    <location>
        <position position="196"/>
    </location>
    <ligand>
        <name>Zn(2+)</name>
        <dbReference type="ChEBI" id="CHEBI:29105"/>
        <label>2</label>
    </ligand>
</feature>
<feature type="binding site" evidence="1">
    <location>
        <position position="207"/>
    </location>
    <ligand>
        <name>Zn(2+)</name>
        <dbReference type="ChEBI" id="CHEBI:29105"/>
        <label>1</label>
    </ligand>
</feature>
<feature type="binding site" evidence="1">
    <location>
        <position position="210"/>
    </location>
    <ligand>
        <name>Zn(2+)</name>
        <dbReference type="ChEBI" id="CHEBI:29105"/>
        <label>1</label>
    </ligand>
</feature>
<organism>
    <name type="scientific">Clostridium acetobutylicum (strain ATCC 824 / DSM 792 / JCM 1419 / IAM 19013 / LMG 5710 / NBRC 13948 / NRRL B-527 / VKM B-1787 / 2291 / W)</name>
    <dbReference type="NCBI Taxonomy" id="272562"/>
    <lineage>
        <taxon>Bacteria</taxon>
        <taxon>Bacillati</taxon>
        <taxon>Bacillota</taxon>
        <taxon>Clostridia</taxon>
        <taxon>Eubacteriales</taxon>
        <taxon>Clostridiaceae</taxon>
        <taxon>Clostridium</taxon>
    </lineage>
</organism>
<dbReference type="EMBL" id="X69050">
    <property type="protein sequence ID" value="CAA48792.1"/>
    <property type="molecule type" value="Genomic_DNA"/>
</dbReference>
<dbReference type="EMBL" id="AE001437">
    <property type="protein sequence ID" value="AAK79254.1"/>
    <property type="molecule type" value="Genomic_DNA"/>
</dbReference>
<dbReference type="EMBL" id="M74569">
    <property type="protein sequence ID" value="AAA23247.1"/>
    <property type="molecule type" value="Genomic_DNA"/>
</dbReference>
<dbReference type="PIR" id="C97058">
    <property type="entry name" value="C97058"/>
</dbReference>
<dbReference type="PIR" id="S41758">
    <property type="entry name" value="S41758"/>
</dbReference>
<dbReference type="RefSeq" id="NP_347914.1">
    <property type="nucleotide sequence ID" value="NC_003030.1"/>
</dbReference>
<dbReference type="RefSeq" id="WP_010964595.1">
    <property type="nucleotide sequence ID" value="NC_003030.1"/>
</dbReference>
<dbReference type="SMR" id="P30725"/>
<dbReference type="STRING" id="272562.CA_C1283"/>
<dbReference type="GeneID" id="44997789"/>
<dbReference type="KEGG" id="cac:CA_C1283"/>
<dbReference type="PATRIC" id="fig|272562.8.peg.1484"/>
<dbReference type="eggNOG" id="COG0484">
    <property type="taxonomic scope" value="Bacteria"/>
</dbReference>
<dbReference type="HOGENOM" id="CLU_017633_0_7_9"/>
<dbReference type="OrthoDB" id="9779889at2"/>
<dbReference type="Proteomes" id="UP000000814">
    <property type="component" value="Chromosome"/>
</dbReference>
<dbReference type="GO" id="GO:0005737">
    <property type="term" value="C:cytoplasm"/>
    <property type="evidence" value="ECO:0007669"/>
    <property type="project" value="UniProtKB-SubCell"/>
</dbReference>
<dbReference type="GO" id="GO:0005524">
    <property type="term" value="F:ATP binding"/>
    <property type="evidence" value="ECO:0007669"/>
    <property type="project" value="InterPro"/>
</dbReference>
<dbReference type="GO" id="GO:0031072">
    <property type="term" value="F:heat shock protein binding"/>
    <property type="evidence" value="ECO:0007669"/>
    <property type="project" value="InterPro"/>
</dbReference>
<dbReference type="GO" id="GO:0051082">
    <property type="term" value="F:unfolded protein binding"/>
    <property type="evidence" value="ECO:0007669"/>
    <property type="project" value="UniProtKB-UniRule"/>
</dbReference>
<dbReference type="GO" id="GO:0008270">
    <property type="term" value="F:zinc ion binding"/>
    <property type="evidence" value="ECO:0007669"/>
    <property type="project" value="UniProtKB-UniRule"/>
</dbReference>
<dbReference type="GO" id="GO:0051085">
    <property type="term" value="P:chaperone cofactor-dependent protein refolding"/>
    <property type="evidence" value="ECO:0007669"/>
    <property type="project" value="TreeGrafter"/>
</dbReference>
<dbReference type="GO" id="GO:0006260">
    <property type="term" value="P:DNA replication"/>
    <property type="evidence" value="ECO:0007669"/>
    <property type="project" value="UniProtKB-KW"/>
</dbReference>
<dbReference type="GO" id="GO:0042026">
    <property type="term" value="P:protein refolding"/>
    <property type="evidence" value="ECO:0007669"/>
    <property type="project" value="TreeGrafter"/>
</dbReference>
<dbReference type="GO" id="GO:0009408">
    <property type="term" value="P:response to heat"/>
    <property type="evidence" value="ECO:0007669"/>
    <property type="project" value="InterPro"/>
</dbReference>
<dbReference type="CDD" id="cd06257">
    <property type="entry name" value="DnaJ"/>
    <property type="match status" value="1"/>
</dbReference>
<dbReference type="CDD" id="cd10747">
    <property type="entry name" value="DnaJ_C"/>
    <property type="match status" value="1"/>
</dbReference>
<dbReference type="CDD" id="cd10719">
    <property type="entry name" value="DnaJ_zf"/>
    <property type="match status" value="1"/>
</dbReference>
<dbReference type="FunFam" id="1.10.287.110:FF:000034">
    <property type="entry name" value="Chaperone protein DnaJ"/>
    <property type="match status" value="1"/>
</dbReference>
<dbReference type="FunFam" id="2.10.230.10:FF:000002">
    <property type="entry name" value="Molecular chaperone DnaJ"/>
    <property type="match status" value="1"/>
</dbReference>
<dbReference type="FunFam" id="2.60.260.20:FF:000004">
    <property type="entry name" value="Molecular chaperone DnaJ"/>
    <property type="match status" value="1"/>
</dbReference>
<dbReference type="Gene3D" id="1.10.287.110">
    <property type="entry name" value="DnaJ domain"/>
    <property type="match status" value="1"/>
</dbReference>
<dbReference type="Gene3D" id="2.10.230.10">
    <property type="entry name" value="Heat shock protein DnaJ, cysteine-rich domain"/>
    <property type="match status" value="1"/>
</dbReference>
<dbReference type="Gene3D" id="2.60.260.20">
    <property type="entry name" value="Urease metallochaperone UreE, N-terminal domain"/>
    <property type="match status" value="2"/>
</dbReference>
<dbReference type="HAMAP" id="MF_01152">
    <property type="entry name" value="DnaJ"/>
    <property type="match status" value="1"/>
</dbReference>
<dbReference type="InterPro" id="IPR012724">
    <property type="entry name" value="DnaJ"/>
</dbReference>
<dbReference type="InterPro" id="IPR002939">
    <property type="entry name" value="DnaJ_C"/>
</dbReference>
<dbReference type="InterPro" id="IPR001623">
    <property type="entry name" value="DnaJ_domain"/>
</dbReference>
<dbReference type="InterPro" id="IPR018253">
    <property type="entry name" value="DnaJ_domain_CS"/>
</dbReference>
<dbReference type="InterPro" id="IPR008971">
    <property type="entry name" value="HSP40/DnaJ_pept-bd"/>
</dbReference>
<dbReference type="InterPro" id="IPR001305">
    <property type="entry name" value="HSP_DnaJ_Cys-rich_dom"/>
</dbReference>
<dbReference type="InterPro" id="IPR036410">
    <property type="entry name" value="HSP_DnaJ_Cys-rich_dom_sf"/>
</dbReference>
<dbReference type="InterPro" id="IPR036869">
    <property type="entry name" value="J_dom_sf"/>
</dbReference>
<dbReference type="NCBIfam" id="TIGR02349">
    <property type="entry name" value="DnaJ_bact"/>
    <property type="match status" value="1"/>
</dbReference>
<dbReference type="NCBIfam" id="NF008035">
    <property type="entry name" value="PRK10767.1"/>
    <property type="match status" value="1"/>
</dbReference>
<dbReference type="NCBIfam" id="NF010890">
    <property type="entry name" value="PRK14297.1"/>
    <property type="match status" value="1"/>
</dbReference>
<dbReference type="PANTHER" id="PTHR43096:SF48">
    <property type="entry name" value="CHAPERONE PROTEIN DNAJ"/>
    <property type="match status" value="1"/>
</dbReference>
<dbReference type="PANTHER" id="PTHR43096">
    <property type="entry name" value="DNAJ HOMOLOG 1, MITOCHONDRIAL-RELATED"/>
    <property type="match status" value="1"/>
</dbReference>
<dbReference type="Pfam" id="PF00226">
    <property type="entry name" value="DnaJ"/>
    <property type="match status" value="1"/>
</dbReference>
<dbReference type="Pfam" id="PF01556">
    <property type="entry name" value="DnaJ_C"/>
    <property type="match status" value="1"/>
</dbReference>
<dbReference type="Pfam" id="PF00684">
    <property type="entry name" value="DnaJ_CXXCXGXG"/>
    <property type="match status" value="1"/>
</dbReference>
<dbReference type="PRINTS" id="PR00625">
    <property type="entry name" value="JDOMAIN"/>
</dbReference>
<dbReference type="SMART" id="SM00271">
    <property type="entry name" value="DnaJ"/>
    <property type="match status" value="1"/>
</dbReference>
<dbReference type="SUPFAM" id="SSF46565">
    <property type="entry name" value="Chaperone J-domain"/>
    <property type="match status" value="1"/>
</dbReference>
<dbReference type="SUPFAM" id="SSF57938">
    <property type="entry name" value="DnaJ/Hsp40 cysteine-rich domain"/>
    <property type="match status" value="1"/>
</dbReference>
<dbReference type="SUPFAM" id="SSF49493">
    <property type="entry name" value="HSP40/DnaJ peptide-binding domain"/>
    <property type="match status" value="2"/>
</dbReference>
<dbReference type="PROSITE" id="PS00636">
    <property type="entry name" value="DNAJ_1"/>
    <property type="match status" value="1"/>
</dbReference>
<dbReference type="PROSITE" id="PS50076">
    <property type="entry name" value="DNAJ_2"/>
    <property type="match status" value="1"/>
</dbReference>
<dbReference type="PROSITE" id="PS51188">
    <property type="entry name" value="ZF_CR"/>
    <property type="match status" value="1"/>
</dbReference>
<keyword id="KW-0143">Chaperone</keyword>
<keyword id="KW-0963">Cytoplasm</keyword>
<keyword id="KW-0235">DNA replication</keyword>
<keyword id="KW-0479">Metal-binding</keyword>
<keyword id="KW-1185">Reference proteome</keyword>
<keyword id="KW-0677">Repeat</keyword>
<keyword id="KW-0346">Stress response</keyword>
<keyword id="KW-0862">Zinc</keyword>
<keyword id="KW-0863">Zinc-finger</keyword>
<accession>P30725</accession>
<proteinExistence type="evidence at transcript level"/>
<evidence type="ECO:0000255" key="1">
    <source>
        <dbReference type="HAMAP-Rule" id="MF_01152"/>
    </source>
</evidence>
<gene>
    <name evidence="1" type="primary">dnaJ</name>
    <name type="ordered locus">CA_C1283</name>
</gene>
<name>DNAJ_CLOAB</name>
<protein>
    <recommendedName>
        <fullName evidence="1">Chaperone protein DnaJ</fullName>
    </recommendedName>
</protein>
<reference key="1">
    <citation type="journal article" date="1993" name="FEMS Microbiol. Lett.">
        <title>Cloning, nucleotide sequence and structural analysis of the Clostridium acetobutylicum dnaJ gene.</title>
        <authorList>
            <person name="Behrens S."/>
            <person name="Narberhaus F."/>
            <person name="Bahl H."/>
        </authorList>
    </citation>
    <scope>NUCLEOTIDE SEQUENCE [GENOMIC DNA]</scope>
    <source>
        <strain>ATCC 4259 / DSM 1731 / NCIB 619</strain>
    </source>
</reference>
<reference key="2">
    <citation type="journal article" date="2001" name="J. Bacteriol.">
        <title>Genome sequence and comparative analysis of the solvent-producing bacterium Clostridium acetobutylicum.</title>
        <authorList>
            <person name="Noelling J."/>
            <person name="Breton G."/>
            <person name="Omelchenko M.V."/>
            <person name="Makarova K.S."/>
            <person name="Zeng Q."/>
            <person name="Gibson R."/>
            <person name="Lee H.M."/>
            <person name="Dubois J."/>
            <person name="Qiu D."/>
            <person name="Hitti J."/>
            <person name="Wolf Y.I."/>
            <person name="Tatusov R.L."/>
            <person name="Sabathe F."/>
            <person name="Doucette-Stamm L.A."/>
            <person name="Soucaille P."/>
            <person name="Daly M.J."/>
            <person name="Bennett G.N."/>
            <person name="Koonin E.V."/>
            <person name="Smith D.R."/>
        </authorList>
    </citation>
    <scope>NUCLEOTIDE SEQUENCE [LARGE SCALE GENOMIC DNA]</scope>
    <source>
        <strain>ATCC 824 / DSM 792 / JCM 1419 / IAM 19013 / LMG 5710 / NBRC 13948 / NRRL B-527 / VKM B-1787 / 2291 / W</strain>
    </source>
</reference>
<reference key="3">
    <citation type="journal article" date="1992" name="J. Bacteriol.">
        <title>Molecular characterization of the dnaK gene region of Clostridium acetobutylicum, including grpE, dnaJ, and a new heat shock gene.</title>
        <authorList>
            <person name="Narberhaus F."/>
            <person name="Giebeler K."/>
            <person name="Bahl H."/>
        </authorList>
    </citation>
    <scope>NUCLEOTIDE SEQUENCE [GENOMIC DNA] OF 1-72</scope>
    <source>
        <strain>ATCC 4259 / DSM 1731 / NCIB 619</strain>
    </source>
</reference>
<sequence>MANKDYYEVLGLEKGASDDEIKKAFRKLAIKYHPDKNRGNKEAEEKFKEINEAYQVLSDPDKKANYDRFGTADFNGGGGFGDFSGGFGDFGDLGDIFNSFFGGGFSGGSSRARKDAPQRGNDMEYSISLTFEEAVFGVEKSINITRSENCETCGGTGAKKGTSPKTCDKCGGTGTIRVQRNTPLGSFVTQSSCDKCGGRGTIISDPCHECHGAGHVRKKRKISVKIPAGVDTGNVIPLRGQGEHGKNGGPAGDLYISIKVTPHKKFKREGFDIYIDTHISFPKAALGTDMTVPTIDGDVKYTIPAGTQSGTVFRLKGKGVQRVNGGGRGNQYVKVIVDTPKALNDKQREALKMFMEASGEAKSEKKSGFKRFFE</sequence>